<evidence type="ECO:0000250" key="1">
    <source>
        <dbReference type="UniProtKB" id="I6YDK7"/>
    </source>
</evidence>
<evidence type="ECO:0000255" key="2">
    <source>
        <dbReference type="PROSITE-ProRule" id="PRU01136"/>
    </source>
</evidence>
<evidence type="ECO:0000255" key="3">
    <source>
        <dbReference type="PROSITE-ProRule" id="PRU01137"/>
    </source>
</evidence>
<evidence type="ECO:0000269" key="4">
    <source>
    </source>
</evidence>
<evidence type="ECO:0000305" key="5"/>
<evidence type="ECO:0000312" key="6">
    <source>
        <dbReference type="EMBL" id="CCP43723.1"/>
    </source>
</evidence>
<reference key="1">
    <citation type="journal article" date="1998" name="Nature">
        <title>Deciphering the biology of Mycobacterium tuberculosis from the complete genome sequence.</title>
        <authorList>
            <person name="Cole S.T."/>
            <person name="Brosch R."/>
            <person name="Parkhill J."/>
            <person name="Garnier T."/>
            <person name="Churcher C.M."/>
            <person name="Harris D.E."/>
            <person name="Gordon S.V."/>
            <person name="Eiglmeier K."/>
            <person name="Gas S."/>
            <person name="Barry C.E. III"/>
            <person name="Tekaia F."/>
            <person name="Badcock K."/>
            <person name="Basham D."/>
            <person name="Brown D."/>
            <person name="Chillingworth T."/>
            <person name="Connor R."/>
            <person name="Davies R.M."/>
            <person name="Devlin K."/>
            <person name="Feltwell T."/>
            <person name="Gentles S."/>
            <person name="Hamlin N."/>
            <person name="Holroyd S."/>
            <person name="Hornsby T."/>
            <person name="Jagels K."/>
            <person name="Krogh A."/>
            <person name="McLean J."/>
            <person name="Moule S."/>
            <person name="Murphy L.D."/>
            <person name="Oliver S."/>
            <person name="Osborne J."/>
            <person name="Quail M.A."/>
            <person name="Rajandream M.A."/>
            <person name="Rogers J."/>
            <person name="Rutter S."/>
            <person name="Seeger K."/>
            <person name="Skelton S."/>
            <person name="Squares S."/>
            <person name="Squares R."/>
            <person name="Sulston J.E."/>
            <person name="Taylor K."/>
            <person name="Whitehead S."/>
            <person name="Barrell B.G."/>
        </authorList>
    </citation>
    <scope>NUCLEOTIDE SEQUENCE [LARGE SCALE GENOMIC DNA]</scope>
    <source>
        <strain>ATCC 25618 / H37Rv</strain>
    </source>
</reference>
<reference key="2">
    <citation type="journal article" date="2007" name="J. Bacteriol.">
        <title>AccD6, a member of the Fas II locus, is a functional carboxyltransferase subunit of the acyl-coenzyme A carboxylase in Mycobacterium tuberculosis.</title>
        <authorList>
            <person name="Daniel J."/>
            <person name="Oh T.J."/>
            <person name="Lee C.M."/>
            <person name="Kolattukudy P.E."/>
        </authorList>
    </citation>
    <scope>INDUCTION</scope>
    <source>
        <strain>H37Rv</strain>
    </source>
</reference>
<reference key="3">
    <citation type="journal article" date="2011" name="Mol. Cell. Proteomics">
        <title>Proteogenomic analysis of Mycobacterium tuberculosis by high resolution mass spectrometry.</title>
        <authorList>
            <person name="Kelkar D.S."/>
            <person name="Kumar D."/>
            <person name="Kumar P."/>
            <person name="Balakrishnan L."/>
            <person name="Muthusamy B."/>
            <person name="Yadav A.K."/>
            <person name="Shrivastava P."/>
            <person name="Marimuthu A."/>
            <person name="Anand S."/>
            <person name="Sundaram H."/>
            <person name="Kingsbury R."/>
            <person name="Harsha H.C."/>
            <person name="Nair B."/>
            <person name="Prasad T.S."/>
            <person name="Chauhan D.S."/>
            <person name="Katoch K."/>
            <person name="Katoch V.M."/>
            <person name="Kumar P."/>
            <person name="Chaerkady R."/>
            <person name="Ramachandran S."/>
            <person name="Dash D."/>
            <person name="Pandey A."/>
        </authorList>
    </citation>
    <scope>IDENTIFICATION BY MASS SPECTROMETRY [LARGE SCALE ANALYSIS]</scope>
    <source>
        <strain>ATCC 25618 / H37Rv</strain>
    </source>
</reference>
<sequence>MLQSTLDPNASAYDEAAATMSGKLDEINAELAKALAGGGPKYVDRHHARGNLTPRERIELLVDPDSPFLELSPLAAYGSNFQIGASLVTGIGAVCGVECMIVANDPTVKGGTSNPWTLRKILRANQIAFENRLPVISLVESGGADLPTQKEIFIPGGQMFRDLTRLSAAGIPTIALVFGNSTAGGAYVPGMSDHVVMIKERSKVFLAGPPLVKMATGEESDDESLGGAEMHARISGLADYFALDELDAIRIGRRIVARLNWIKQGPAPAPVTEPLFDAEELIGIVPPDLRIPFDPREVIARIVDGSEFDEFKPLYGSSLVTGWARLHGYPLGILANARGVLFSEESQKATQFIQLANRADTPLLFLHNTTGYMVGKDYEEGGMIKHGSMMINAVSNSTVPHISLLIGASYGAGHYGMCGRAYDPRFLFAWPSAKSAVMGGAQLSGVLSIVARAAAEARGQQVDEAADAAMRAAVEGQIEAESLPLVLSGMLYDDGVIDPRDTRTVLGMCLSAIANGPIKGTSNFGVFRM</sequence>
<comment type="function">
    <text evidence="1">Component of a biotin-dependent acyl-CoA carboxylase complex. This subunit transfers the CO2 from carboxybiotin to the CoA ester substrate.</text>
</comment>
<comment type="subunit">
    <text evidence="1">The biotin-dependent acyl-CoA carboxylase complex is composed of an AccA protein, which contains the biotin carboxylase (BC) and biotin carboxyl carrier protein (BCCP) domains, and an AccD protein, which contains the carboxyl transferase (CT) domain.</text>
</comment>
<comment type="induction">
    <text evidence="4">Does not show significant changes in expression throughout M.tuberculosis growth phases.</text>
</comment>
<comment type="similarity">
    <text evidence="5">Belongs to the AccD/PCCB family.</text>
</comment>
<protein>
    <recommendedName>
        <fullName evidence="5">Probable biotin-dependent acyl-coenzyme A carboxylase beta2 subunit</fullName>
        <ecNumber evidence="1">2.1.3.-</ecNumber>
    </recommendedName>
</protein>
<proteinExistence type="evidence at protein level"/>
<keyword id="KW-1185">Reference proteome</keyword>
<keyword id="KW-0808">Transferase</keyword>
<dbReference type="EC" id="2.1.3.-" evidence="1"/>
<dbReference type="EMBL" id="AL123456">
    <property type="protein sequence ID" value="CCP43723.1"/>
    <property type="molecule type" value="Genomic_DNA"/>
</dbReference>
<dbReference type="RefSeq" id="NP_215489.1">
    <property type="nucleotide sequence ID" value="NC_000962.3"/>
</dbReference>
<dbReference type="RefSeq" id="WP_010886097.1">
    <property type="nucleotide sequence ID" value="NZ_NVQJ01000001.1"/>
</dbReference>
<dbReference type="SMR" id="O86318"/>
<dbReference type="STRING" id="83332.Rv0974c"/>
<dbReference type="PaxDb" id="83332-Rv0974c"/>
<dbReference type="DNASU" id="886064"/>
<dbReference type="GeneID" id="886064"/>
<dbReference type="KEGG" id="mtu:Rv0974c"/>
<dbReference type="KEGG" id="mtv:RVBD_0974c"/>
<dbReference type="PATRIC" id="fig|83332.111.peg.1081"/>
<dbReference type="TubercuList" id="Rv0974c"/>
<dbReference type="eggNOG" id="COG4799">
    <property type="taxonomic scope" value="Bacteria"/>
</dbReference>
<dbReference type="InParanoid" id="O86318"/>
<dbReference type="OrthoDB" id="9803706at2"/>
<dbReference type="PhylomeDB" id="O86318"/>
<dbReference type="Proteomes" id="UP000001584">
    <property type="component" value="Chromosome"/>
</dbReference>
<dbReference type="GO" id="GO:0016874">
    <property type="term" value="F:ligase activity"/>
    <property type="evidence" value="ECO:0007669"/>
    <property type="project" value="InterPro"/>
</dbReference>
<dbReference type="GO" id="GO:0016740">
    <property type="term" value="F:transferase activity"/>
    <property type="evidence" value="ECO:0007669"/>
    <property type="project" value="UniProtKB-KW"/>
</dbReference>
<dbReference type="GO" id="GO:0071768">
    <property type="term" value="P:mycolic acid biosynthetic process"/>
    <property type="evidence" value="ECO:0000315"/>
    <property type="project" value="MTBBASE"/>
</dbReference>
<dbReference type="FunFam" id="3.90.226.10:FF:000021">
    <property type="entry name" value="Acetyl-CoA carboxylase carboxyltransferase subunit"/>
    <property type="match status" value="1"/>
</dbReference>
<dbReference type="FunFam" id="3.90.226.10:FF:000030">
    <property type="entry name" value="Acetyl-CoA carboxylase carboxyltransferase subunit"/>
    <property type="match status" value="1"/>
</dbReference>
<dbReference type="Gene3D" id="3.90.226.10">
    <property type="entry name" value="2-enoyl-CoA Hydratase, Chain A, domain 1"/>
    <property type="match status" value="2"/>
</dbReference>
<dbReference type="InterPro" id="IPR034733">
    <property type="entry name" value="AcCoA_carboxyl_beta"/>
</dbReference>
<dbReference type="InterPro" id="IPR029045">
    <property type="entry name" value="ClpP/crotonase-like_dom_sf"/>
</dbReference>
<dbReference type="InterPro" id="IPR011763">
    <property type="entry name" value="COA_CT_C"/>
</dbReference>
<dbReference type="InterPro" id="IPR011762">
    <property type="entry name" value="COA_CT_N"/>
</dbReference>
<dbReference type="InterPro" id="IPR045190">
    <property type="entry name" value="MCCB/AccD1-like"/>
</dbReference>
<dbReference type="PANTHER" id="PTHR22855">
    <property type="entry name" value="ACETYL, PROPIONYL, PYRUVATE, AND GLUTACONYL CARBOXYLASE-RELATED"/>
    <property type="match status" value="1"/>
</dbReference>
<dbReference type="PANTHER" id="PTHR22855:SF46">
    <property type="entry name" value="METHYLCROTONOYL-COA CARBOXYLASE"/>
    <property type="match status" value="1"/>
</dbReference>
<dbReference type="Pfam" id="PF01039">
    <property type="entry name" value="Carboxyl_trans"/>
    <property type="match status" value="1"/>
</dbReference>
<dbReference type="SUPFAM" id="SSF52096">
    <property type="entry name" value="ClpP/crotonase"/>
    <property type="match status" value="2"/>
</dbReference>
<dbReference type="PROSITE" id="PS50989">
    <property type="entry name" value="COA_CT_CTER"/>
    <property type="match status" value="1"/>
</dbReference>
<dbReference type="PROSITE" id="PS50980">
    <property type="entry name" value="COA_CT_NTER"/>
    <property type="match status" value="1"/>
</dbReference>
<organism>
    <name type="scientific">Mycobacterium tuberculosis (strain ATCC 25618 / H37Rv)</name>
    <dbReference type="NCBI Taxonomy" id="83332"/>
    <lineage>
        <taxon>Bacteria</taxon>
        <taxon>Bacillati</taxon>
        <taxon>Actinomycetota</taxon>
        <taxon>Actinomycetes</taxon>
        <taxon>Mycobacteriales</taxon>
        <taxon>Mycobacteriaceae</taxon>
        <taxon>Mycobacterium</taxon>
        <taxon>Mycobacterium tuberculosis complex</taxon>
    </lineage>
</organism>
<feature type="chain" id="PRO_0000452369" description="Probable biotin-dependent acyl-coenzyme A carboxylase beta2 subunit">
    <location>
        <begin position="1"/>
        <end position="529"/>
    </location>
</feature>
<feature type="domain" description="CoA carboxyltransferase N-terminal" evidence="2">
    <location>
        <begin position="20"/>
        <end position="271"/>
    </location>
</feature>
<feature type="domain" description="CoA carboxyltransferase C-terminal" evidence="3">
    <location>
        <begin position="270"/>
        <end position="520"/>
    </location>
</feature>
<name>ACCD2_MYCTU</name>
<gene>
    <name type="primary">accD2</name>
    <name evidence="6" type="ordered locus">Rv0974c</name>
</gene>
<accession>O86318</accession>
<accession>I6Y5A8</accession>
<accession>L0T826</accession>